<feature type="chain" id="PRO_1000003011" description="Phospho-N-acetylmuramoyl-pentapeptide-transferase">
    <location>
        <begin position="1"/>
        <end position="359"/>
    </location>
</feature>
<feature type="transmembrane region" description="Helical" evidence="1">
    <location>
        <begin position="3"/>
        <end position="23"/>
    </location>
</feature>
<feature type="transmembrane region" description="Helical" evidence="1">
    <location>
        <begin position="55"/>
        <end position="75"/>
    </location>
</feature>
<feature type="transmembrane region" description="Helical" evidence="1">
    <location>
        <begin position="80"/>
        <end position="100"/>
    </location>
</feature>
<feature type="transmembrane region" description="Helical" evidence="1">
    <location>
        <begin position="117"/>
        <end position="137"/>
    </location>
</feature>
<feature type="transmembrane region" description="Helical" evidence="1">
    <location>
        <begin position="156"/>
        <end position="176"/>
    </location>
</feature>
<feature type="transmembrane region" description="Helical" evidence="1">
    <location>
        <begin position="187"/>
        <end position="207"/>
    </location>
</feature>
<feature type="transmembrane region" description="Helical" evidence="1">
    <location>
        <begin position="231"/>
        <end position="251"/>
    </location>
</feature>
<feature type="transmembrane region" description="Helical" evidence="1">
    <location>
        <begin position="255"/>
        <end position="275"/>
    </location>
</feature>
<feature type="transmembrane region" description="Helical" evidence="1">
    <location>
        <begin position="280"/>
        <end position="300"/>
    </location>
</feature>
<feature type="transmembrane region" description="Helical" evidence="1">
    <location>
        <begin position="334"/>
        <end position="354"/>
    </location>
</feature>
<gene>
    <name evidence="1" type="primary">mraY</name>
    <name type="ordered locus">BCG_2173c</name>
</gene>
<proteinExistence type="inferred from homology"/>
<organism>
    <name type="scientific">Mycobacterium bovis (strain BCG / Pasteur 1173P2)</name>
    <dbReference type="NCBI Taxonomy" id="410289"/>
    <lineage>
        <taxon>Bacteria</taxon>
        <taxon>Bacillati</taxon>
        <taxon>Actinomycetota</taxon>
        <taxon>Actinomycetes</taxon>
        <taxon>Mycobacteriales</taxon>
        <taxon>Mycobacteriaceae</taxon>
        <taxon>Mycobacterium</taxon>
        <taxon>Mycobacterium tuberculosis complex</taxon>
    </lineage>
</organism>
<reference key="1">
    <citation type="journal article" date="2007" name="Proc. Natl. Acad. Sci. U.S.A.">
        <title>Genome plasticity of BCG and impact on vaccine efficacy.</title>
        <authorList>
            <person name="Brosch R."/>
            <person name="Gordon S.V."/>
            <person name="Garnier T."/>
            <person name="Eiglmeier K."/>
            <person name="Frigui W."/>
            <person name="Valenti P."/>
            <person name="Dos Santos S."/>
            <person name="Duthoy S."/>
            <person name="Lacroix C."/>
            <person name="Garcia-Pelayo C."/>
            <person name="Inwald J.K."/>
            <person name="Golby P."/>
            <person name="Garcia J.N."/>
            <person name="Hewinson R.G."/>
            <person name="Behr M.A."/>
            <person name="Quail M.A."/>
            <person name="Churcher C."/>
            <person name="Barrell B.G."/>
            <person name="Parkhill J."/>
            <person name="Cole S.T."/>
        </authorList>
    </citation>
    <scope>NUCLEOTIDE SEQUENCE [LARGE SCALE GENOMIC DNA]</scope>
    <source>
        <strain>BCG / Pasteur 1173P2</strain>
    </source>
</reference>
<name>MRAY_MYCBP</name>
<protein>
    <recommendedName>
        <fullName evidence="1">Phospho-N-acetylmuramoyl-pentapeptide-transferase</fullName>
        <ecNumber evidence="1">2.7.8.13</ecNumber>
    </recommendedName>
    <alternativeName>
        <fullName evidence="1">UDP-MurNAc-pentapeptide phosphotransferase</fullName>
    </alternativeName>
</protein>
<comment type="function">
    <text evidence="1">Catalyzes the initial step of the lipid cycle reactions in the biosynthesis of the cell wall peptidoglycan: transfers peptidoglycan precursor phospho-MurNAc-pentapeptide from UDP-MurNAc-pentapeptide onto the lipid carrier undecaprenyl phosphate, yielding undecaprenyl-pyrophosphoryl-MurNAc-pentapeptide, known as lipid I.</text>
</comment>
<comment type="catalytic activity">
    <reaction evidence="1">
        <text>UDP-N-acetyl-alpha-D-muramoyl-L-alanyl-gamma-D-glutamyl-meso-2,6-diaminopimeloyl-D-alanyl-D-alanine + di-trans,octa-cis-undecaprenyl phosphate = di-trans,octa-cis-undecaprenyl diphospho-N-acetyl-alpha-D-muramoyl-L-alanyl-D-glutamyl-meso-2,6-diaminopimeloyl-D-alanyl-D-alanine + UMP</text>
        <dbReference type="Rhea" id="RHEA:28386"/>
        <dbReference type="ChEBI" id="CHEBI:57865"/>
        <dbReference type="ChEBI" id="CHEBI:60392"/>
        <dbReference type="ChEBI" id="CHEBI:61386"/>
        <dbReference type="ChEBI" id="CHEBI:61387"/>
        <dbReference type="EC" id="2.7.8.13"/>
    </reaction>
</comment>
<comment type="cofactor">
    <cofactor evidence="1">
        <name>Mg(2+)</name>
        <dbReference type="ChEBI" id="CHEBI:18420"/>
    </cofactor>
</comment>
<comment type="pathway">
    <text evidence="1">Cell wall biogenesis; peptidoglycan biosynthesis.</text>
</comment>
<comment type="subcellular location">
    <subcellularLocation>
        <location evidence="1">Cell membrane</location>
        <topology evidence="1">Multi-pass membrane protein</topology>
    </subcellularLocation>
</comment>
<comment type="similarity">
    <text evidence="1">Belongs to the glycosyltransferase 4 family. MraY subfamily.</text>
</comment>
<keyword id="KW-0131">Cell cycle</keyword>
<keyword id="KW-0132">Cell division</keyword>
<keyword id="KW-1003">Cell membrane</keyword>
<keyword id="KW-0133">Cell shape</keyword>
<keyword id="KW-0961">Cell wall biogenesis/degradation</keyword>
<keyword id="KW-0460">Magnesium</keyword>
<keyword id="KW-0472">Membrane</keyword>
<keyword id="KW-0479">Metal-binding</keyword>
<keyword id="KW-0573">Peptidoglycan synthesis</keyword>
<keyword id="KW-0808">Transferase</keyword>
<keyword id="KW-0812">Transmembrane</keyword>
<keyword id="KW-1133">Transmembrane helix</keyword>
<evidence type="ECO:0000255" key="1">
    <source>
        <dbReference type="HAMAP-Rule" id="MF_00038"/>
    </source>
</evidence>
<dbReference type="EC" id="2.7.8.13" evidence="1"/>
<dbReference type="EMBL" id="AM408590">
    <property type="protein sequence ID" value="CAL72161.1"/>
    <property type="molecule type" value="Genomic_DNA"/>
</dbReference>
<dbReference type="RefSeq" id="WP_003411171.1">
    <property type="nucleotide sequence ID" value="NC_008769.1"/>
</dbReference>
<dbReference type="SMR" id="A1KKJ9"/>
<dbReference type="KEGG" id="mbb:BCG_2173c"/>
<dbReference type="HOGENOM" id="CLU_023982_0_1_11"/>
<dbReference type="UniPathway" id="UPA00219"/>
<dbReference type="Proteomes" id="UP000001472">
    <property type="component" value="Chromosome"/>
</dbReference>
<dbReference type="GO" id="GO:0005886">
    <property type="term" value="C:plasma membrane"/>
    <property type="evidence" value="ECO:0007669"/>
    <property type="project" value="UniProtKB-SubCell"/>
</dbReference>
<dbReference type="GO" id="GO:0046872">
    <property type="term" value="F:metal ion binding"/>
    <property type="evidence" value="ECO:0007669"/>
    <property type="project" value="UniProtKB-KW"/>
</dbReference>
<dbReference type="GO" id="GO:0008963">
    <property type="term" value="F:phospho-N-acetylmuramoyl-pentapeptide-transferase activity"/>
    <property type="evidence" value="ECO:0007669"/>
    <property type="project" value="UniProtKB-UniRule"/>
</dbReference>
<dbReference type="GO" id="GO:0051992">
    <property type="term" value="F:UDP-N-acetylmuramoyl-L-alanyl-D-glutamyl-meso-2,6-diaminopimelyl-D-alanyl-D-alanine:undecaprenyl-phosphate transferase activity"/>
    <property type="evidence" value="ECO:0007669"/>
    <property type="project" value="RHEA"/>
</dbReference>
<dbReference type="GO" id="GO:0051301">
    <property type="term" value="P:cell division"/>
    <property type="evidence" value="ECO:0007669"/>
    <property type="project" value="UniProtKB-KW"/>
</dbReference>
<dbReference type="GO" id="GO:0071555">
    <property type="term" value="P:cell wall organization"/>
    <property type="evidence" value="ECO:0007669"/>
    <property type="project" value="UniProtKB-KW"/>
</dbReference>
<dbReference type="GO" id="GO:0009252">
    <property type="term" value="P:peptidoglycan biosynthetic process"/>
    <property type="evidence" value="ECO:0007669"/>
    <property type="project" value="UniProtKB-UniRule"/>
</dbReference>
<dbReference type="GO" id="GO:0008360">
    <property type="term" value="P:regulation of cell shape"/>
    <property type="evidence" value="ECO:0007669"/>
    <property type="project" value="UniProtKB-KW"/>
</dbReference>
<dbReference type="CDD" id="cd06852">
    <property type="entry name" value="GT_MraY"/>
    <property type="match status" value="1"/>
</dbReference>
<dbReference type="HAMAP" id="MF_00038">
    <property type="entry name" value="MraY"/>
    <property type="match status" value="1"/>
</dbReference>
<dbReference type="InterPro" id="IPR000715">
    <property type="entry name" value="Glycosyl_transferase_4"/>
</dbReference>
<dbReference type="InterPro" id="IPR003524">
    <property type="entry name" value="PNAcMuramoyl-5peptid_Trfase"/>
</dbReference>
<dbReference type="InterPro" id="IPR018480">
    <property type="entry name" value="PNAcMuramoyl-5peptid_Trfase_CS"/>
</dbReference>
<dbReference type="NCBIfam" id="TIGR00445">
    <property type="entry name" value="mraY"/>
    <property type="match status" value="1"/>
</dbReference>
<dbReference type="PANTHER" id="PTHR22926">
    <property type="entry name" value="PHOSPHO-N-ACETYLMURAMOYL-PENTAPEPTIDE-TRANSFERASE"/>
    <property type="match status" value="1"/>
</dbReference>
<dbReference type="PANTHER" id="PTHR22926:SF5">
    <property type="entry name" value="PHOSPHO-N-ACETYLMURAMOYL-PENTAPEPTIDE-TRANSFERASE HOMOLOG"/>
    <property type="match status" value="1"/>
</dbReference>
<dbReference type="Pfam" id="PF00953">
    <property type="entry name" value="Glycos_transf_4"/>
    <property type="match status" value="1"/>
</dbReference>
<dbReference type="Pfam" id="PF10555">
    <property type="entry name" value="MraY_sig1"/>
    <property type="match status" value="1"/>
</dbReference>
<dbReference type="PROSITE" id="PS01347">
    <property type="entry name" value="MRAY_1"/>
    <property type="match status" value="1"/>
</dbReference>
<dbReference type="PROSITE" id="PS01348">
    <property type="entry name" value="MRAY_2"/>
    <property type="match status" value="1"/>
</dbReference>
<accession>A1KKJ9</accession>
<sequence length="359" mass="37713">MRQILIAVAVAVTVSILLTPVLIRLFTKQGFGHQIREDGPPSHHTKRGTPSMGGVAILAGIWAGYLGAHLAGLAFDGEGIGASGLLVLGLATALGGVGFIDDLIKIRRSRNLGLNKTAKTVGQITSAVLFGVLVLQFRNAAGLTPGSADLSYVREIATVTLAPVLFVLFCVVIVSAWSNAVNFTDGLDGLAAGTMAMVTAAYVLITFWQYRNACVTAPGLGCYNVRDPLDLALIAAATAGACIGFLWWNAAPAKIFMGDTGSLALGGVIAGLSVTSRTEILAVVLGALFVAEITSVVLQILTFRTTGRRMFRMAPFHHHFELVGWAETTVIIRFWLLTAITCGLGVALFYGEWLAAVGA</sequence>